<reference key="1">
    <citation type="journal article" date="1997" name="J. Bacteriol.">
        <title>Complete genome sequence of Methanobacterium thermoautotrophicum deltaH: functional analysis and comparative genomics.</title>
        <authorList>
            <person name="Smith D.R."/>
            <person name="Doucette-Stamm L.A."/>
            <person name="Deloughery C."/>
            <person name="Lee H.-M."/>
            <person name="Dubois J."/>
            <person name="Aldredge T."/>
            <person name="Bashirzadeh R."/>
            <person name="Blakely D."/>
            <person name="Cook R."/>
            <person name="Gilbert K."/>
            <person name="Harrison D."/>
            <person name="Hoang L."/>
            <person name="Keagle P."/>
            <person name="Lumm W."/>
            <person name="Pothier B."/>
            <person name="Qiu D."/>
            <person name="Spadafora R."/>
            <person name="Vicare R."/>
            <person name="Wang Y."/>
            <person name="Wierzbowski J."/>
            <person name="Gibson R."/>
            <person name="Jiwani N."/>
            <person name="Caruso A."/>
            <person name="Bush D."/>
            <person name="Safer H."/>
            <person name="Patwell D."/>
            <person name="Prabhakar S."/>
            <person name="McDougall S."/>
            <person name="Shimer G."/>
            <person name="Goyal A."/>
            <person name="Pietrovski S."/>
            <person name="Church G.M."/>
            <person name="Daniels C.J."/>
            <person name="Mao J.-I."/>
            <person name="Rice P."/>
            <person name="Noelling J."/>
            <person name="Reeve J.N."/>
        </authorList>
    </citation>
    <scope>NUCLEOTIDE SEQUENCE [LARGE SCALE GENOMIC DNA]</scope>
    <source>
        <strain>ATCC 29096 / DSM 1053 / JCM 10044 / NBRC 100330 / Delta H</strain>
    </source>
</reference>
<sequence>MARQALDLFDEGFQELTPSEFFRKNKQMLGFTGKIRSLTIVFHELITNSFDAAEEAGILPEIKIDLKRIGKDHYILRHQDNGPGIPEKYIPKVFCTMFAGSKFRNIQSRGQQGLGCSGCVLLSQMTTGKPVKVISGTMENGELKGVKMTLKMDVKKNQGLILEKEEVEVDGTGVCIELHFKDVSYSLSEQGAYEYIRRTMIANPHARIVFNDPTGNRYVFNRASDVIPPMPKEVLPHPWGVTADDLIFMAKHTDKRRFGSMLKSNLSRMSSMKIKELEELTGIDLNKRPKDMKWEEAEQIVEAFKKMKFMSPPTSGLIPIGEEQIDKGMKEILQPEFTATVTRKPKTYRGGIAFIVEAGIAYGGNSGRLVGDQRKAEIMRFANRVPLTFDAGSCAITEGVKSLDWKRYGIRDLENAPISIFVNVVSTNVPYLSTGKQSVSPEPEILGEIRQATMIVARKLHKYLRKKKAAKEEAQRAKIFESYVPVIIKQAALLAEREEPDYRELLDTVTRRAKLEILGGITE</sequence>
<protein>
    <recommendedName>
        <fullName evidence="1">Type 2 DNA topoisomerase 6 subunit B</fullName>
        <ecNumber evidence="1">5.6.2.2</ecNumber>
    </recommendedName>
    <alternativeName>
        <fullName evidence="1">Type II DNA topoisomerase VI subunit B</fullName>
        <shortName evidence="1">TopoVI-B</shortName>
    </alternativeName>
</protein>
<comment type="function">
    <text evidence="1">Relaxes both positive and negative superturns and exhibits a strong decatenase activity.</text>
</comment>
<comment type="catalytic activity">
    <reaction evidence="1">
        <text>ATP-dependent breakage, passage and rejoining of double-stranded DNA.</text>
        <dbReference type="EC" id="5.6.2.2"/>
    </reaction>
</comment>
<comment type="subunit">
    <text evidence="1">Homodimer. Heterotetramer of two Top6A and two Top6B chains.</text>
</comment>
<comment type="similarity">
    <text evidence="1">Belongs to the TOP6B family.</text>
</comment>
<keyword id="KW-0067">ATP-binding</keyword>
<keyword id="KW-0238">DNA-binding</keyword>
<keyword id="KW-0413">Isomerase</keyword>
<keyword id="KW-0547">Nucleotide-binding</keyword>
<keyword id="KW-1185">Reference proteome</keyword>
<keyword id="KW-0799">Topoisomerase</keyword>
<proteinExistence type="inferred from homology"/>
<feature type="chain" id="PRO_0000145464" description="Type 2 DNA topoisomerase 6 subunit B">
    <location>
        <begin position="1"/>
        <end position="523"/>
    </location>
</feature>
<feature type="binding site" evidence="1">
    <location>
        <position position="48"/>
    </location>
    <ligand>
        <name>ATP</name>
        <dbReference type="ChEBI" id="CHEBI:30616"/>
    </ligand>
</feature>
<feature type="binding site" evidence="1">
    <location>
        <position position="80"/>
    </location>
    <ligand>
        <name>ATP</name>
        <dbReference type="ChEBI" id="CHEBI:30616"/>
    </ligand>
</feature>
<feature type="binding site" evidence="1">
    <location>
        <begin position="101"/>
        <end position="102"/>
    </location>
    <ligand>
        <name>ATP</name>
        <dbReference type="ChEBI" id="CHEBI:30616"/>
    </ligand>
</feature>
<feature type="binding site" evidence="1">
    <location>
        <begin position="110"/>
        <end position="117"/>
    </location>
    <ligand>
        <name>ATP</name>
        <dbReference type="ChEBI" id="CHEBI:30616"/>
    </ligand>
</feature>
<feature type="binding site" evidence="1">
    <location>
        <position position="436"/>
    </location>
    <ligand>
        <name>ATP</name>
        <dbReference type="ChEBI" id="CHEBI:30616"/>
    </ligand>
</feature>
<dbReference type="EC" id="5.6.2.2" evidence="1"/>
<dbReference type="EMBL" id="AE000666">
    <property type="protein sequence ID" value="AAB85503.1"/>
    <property type="molecule type" value="Genomic_DNA"/>
</dbReference>
<dbReference type="PIR" id="C69001">
    <property type="entry name" value="C69001"/>
</dbReference>
<dbReference type="RefSeq" id="WP_010876638.1">
    <property type="nucleotide sequence ID" value="NC_000916.1"/>
</dbReference>
<dbReference type="SMR" id="O27088"/>
<dbReference type="FunCoup" id="O27088">
    <property type="interactions" value="16"/>
</dbReference>
<dbReference type="STRING" id="187420.MTH_1007"/>
<dbReference type="PaxDb" id="187420-MTH_1007"/>
<dbReference type="EnsemblBacteria" id="AAB85503">
    <property type="protein sequence ID" value="AAB85503"/>
    <property type="gene ID" value="MTH_1007"/>
</dbReference>
<dbReference type="GeneID" id="1471415"/>
<dbReference type="GeneID" id="77401538"/>
<dbReference type="KEGG" id="mth:MTH_1007"/>
<dbReference type="PATRIC" id="fig|187420.15.peg.990"/>
<dbReference type="HOGENOM" id="CLU_006403_0_0_2"/>
<dbReference type="InParanoid" id="O27088"/>
<dbReference type="Proteomes" id="UP000005223">
    <property type="component" value="Chromosome"/>
</dbReference>
<dbReference type="GO" id="GO:0005524">
    <property type="term" value="F:ATP binding"/>
    <property type="evidence" value="ECO:0007669"/>
    <property type="project" value="UniProtKB-UniRule"/>
</dbReference>
<dbReference type="GO" id="GO:0003677">
    <property type="term" value="F:DNA binding"/>
    <property type="evidence" value="ECO:0007669"/>
    <property type="project" value="UniProtKB-UniRule"/>
</dbReference>
<dbReference type="GO" id="GO:0003918">
    <property type="term" value="F:DNA topoisomerase type II (double strand cut, ATP-hydrolyzing) activity"/>
    <property type="evidence" value="ECO:0007669"/>
    <property type="project" value="UniProtKB-UniRule"/>
</dbReference>
<dbReference type="GO" id="GO:0006265">
    <property type="term" value="P:DNA topological change"/>
    <property type="evidence" value="ECO:0007669"/>
    <property type="project" value="UniProtKB-UniRule"/>
</dbReference>
<dbReference type="CDD" id="cd16933">
    <property type="entry name" value="HATPase_TopVIB-like"/>
    <property type="match status" value="1"/>
</dbReference>
<dbReference type="CDD" id="cd00823">
    <property type="entry name" value="TopoIIB_Trans"/>
    <property type="match status" value="1"/>
</dbReference>
<dbReference type="Gene3D" id="1.10.8.50">
    <property type="match status" value="1"/>
</dbReference>
<dbReference type="Gene3D" id="3.30.230.10">
    <property type="match status" value="1"/>
</dbReference>
<dbReference type="Gene3D" id="3.30.565.10">
    <property type="entry name" value="Histidine kinase-like ATPase, C-terminal domain"/>
    <property type="match status" value="1"/>
</dbReference>
<dbReference type="HAMAP" id="MF_00322">
    <property type="entry name" value="Top6B"/>
    <property type="match status" value="1"/>
</dbReference>
<dbReference type="InterPro" id="IPR036890">
    <property type="entry name" value="HATPase_C_sf"/>
</dbReference>
<dbReference type="InterPro" id="IPR020568">
    <property type="entry name" value="Ribosomal_Su5_D2-typ_SF"/>
</dbReference>
<dbReference type="InterPro" id="IPR010979">
    <property type="entry name" value="Ribosomal_uS13-like_H2TH"/>
</dbReference>
<dbReference type="InterPro" id="IPR014721">
    <property type="entry name" value="Ribsml_uS5_D2-typ_fold_subgr"/>
</dbReference>
<dbReference type="InterPro" id="IPR005734">
    <property type="entry name" value="TopoVI_B"/>
</dbReference>
<dbReference type="InterPro" id="IPR015320">
    <property type="entry name" value="TopoVI_B_transducer"/>
</dbReference>
<dbReference type="NCBIfam" id="NF003218">
    <property type="entry name" value="PRK04184.1"/>
    <property type="match status" value="1"/>
</dbReference>
<dbReference type="NCBIfam" id="TIGR01052">
    <property type="entry name" value="top6b"/>
    <property type="match status" value="1"/>
</dbReference>
<dbReference type="PANTHER" id="PTHR48444">
    <property type="entry name" value="DNA TOPOISOMERASE 6 SUBUNIT B"/>
    <property type="match status" value="1"/>
</dbReference>
<dbReference type="PANTHER" id="PTHR48444:SF1">
    <property type="entry name" value="DNA TOPOISOMERASE 6 SUBUNIT B"/>
    <property type="match status" value="1"/>
</dbReference>
<dbReference type="Pfam" id="PF02518">
    <property type="entry name" value="HATPase_c"/>
    <property type="match status" value="1"/>
</dbReference>
<dbReference type="Pfam" id="PF09239">
    <property type="entry name" value="Topo-VIb_trans"/>
    <property type="match status" value="1"/>
</dbReference>
<dbReference type="PIRSF" id="PIRSF006553">
    <property type="entry name" value="TopoVI_B"/>
    <property type="match status" value="1"/>
</dbReference>
<dbReference type="SMART" id="SM00387">
    <property type="entry name" value="HATPase_c"/>
    <property type="match status" value="1"/>
</dbReference>
<dbReference type="SUPFAM" id="SSF55874">
    <property type="entry name" value="ATPase domain of HSP90 chaperone/DNA topoisomerase II/histidine kinase"/>
    <property type="match status" value="1"/>
</dbReference>
<dbReference type="SUPFAM" id="SSF54211">
    <property type="entry name" value="Ribosomal protein S5 domain 2-like"/>
    <property type="match status" value="1"/>
</dbReference>
<dbReference type="SUPFAM" id="SSF46946">
    <property type="entry name" value="S13-like H2TH domain"/>
    <property type="match status" value="1"/>
</dbReference>
<organism>
    <name type="scientific">Methanothermobacter thermautotrophicus (strain ATCC 29096 / DSM 1053 / JCM 10044 / NBRC 100330 / Delta H)</name>
    <name type="common">Methanobacterium thermoautotrophicum</name>
    <dbReference type="NCBI Taxonomy" id="187420"/>
    <lineage>
        <taxon>Archaea</taxon>
        <taxon>Methanobacteriati</taxon>
        <taxon>Methanobacteriota</taxon>
        <taxon>Methanomada group</taxon>
        <taxon>Methanobacteria</taxon>
        <taxon>Methanobacteriales</taxon>
        <taxon>Methanobacteriaceae</taxon>
        <taxon>Methanothermobacter</taxon>
    </lineage>
</organism>
<name>TOP6B_METTH</name>
<gene>
    <name evidence="1" type="primary">top6B</name>
    <name type="ordered locus">MTH_1007</name>
</gene>
<evidence type="ECO:0000255" key="1">
    <source>
        <dbReference type="HAMAP-Rule" id="MF_00322"/>
    </source>
</evidence>
<accession>O27088</accession>